<organism>
    <name type="scientific">Saccharolobus islandicus (strain Y.G.57.14 / Yellowstone #1)</name>
    <name type="common">Sulfolobus islandicus</name>
    <dbReference type="NCBI Taxonomy" id="439386"/>
    <lineage>
        <taxon>Archaea</taxon>
        <taxon>Thermoproteota</taxon>
        <taxon>Thermoprotei</taxon>
        <taxon>Sulfolobales</taxon>
        <taxon>Sulfolobaceae</taxon>
        <taxon>Saccharolobus</taxon>
    </lineage>
</organism>
<dbReference type="EMBL" id="CP001403">
    <property type="protein sequence ID" value="ACP46188.1"/>
    <property type="molecule type" value="Genomic_DNA"/>
</dbReference>
<dbReference type="RefSeq" id="WP_012711820.1">
    <property type="nucleotide sequence ID" value="NC_012622.1"/>
</dbReference>
<dbReference type="SMR" id="C3N7J4"/>
<dbReference type="KEGG" id="siy:YG5714_1932"/>
<dbReference type="HOGENOM" id="CLU_176720_0_0_2"/>
<dbReference type="Proteomes" id="UP000002308">
    <property type="component" value="Chromosome"/>
</dbReference>
<dbReference type="GO" id="GO:0005829">
    <property type="term" value="C:cytosol"/>
    <property type="evidence" value="ECO:0007669"/>
    <property type="project" value="UniProtKB-ARBA"/>
</dbReference>
<dbReference type="GO" id="GO:1990904">
    <property type="term" value="C:ribonucleoprotein complex"/>
    <property type="evidence" value="ECO:0007669"/>
    <property type="project" value="UniProtKB-KW"/>
</dbReference>
<dbReference type="GO" id="GO:0005840">
    <property type="term" value="C:ribosome"/>
    <property type="evidence" value="ECO:0007669"/>
    <property type="project" value="UniProtKB-KW"/>
</dbReference>
<dbReference type="GO" id="GO:0003735">
    <property type="term" value="F:structural constituent of ribosome"/>
    <property type="evidence" value="ECO:0007669"/>
    <property type="project" value="InterPro"/>
</dbReference>
<dbReference type="GO" id="GO:0006412">
    <property type="term" value="P:translation"/>
    <property type="evidence" value="ECO:0007669"/>
    <property type="project" value="UniProtKB-UniRule"/>
</dbReference>
<dbReference type="Gene3D" id="1.10.60.20">
    <property type="entry name" value="Ribosomal protein S17e-like"/>
    <property type="match status" value="1"/>
</dbReference>
<dbReference type="HAMAP" id="MF_00511">
    <property type="entry name" value="Ribosomal_eS17"/>
    <property type="match status" value="1"/>
</dbReference>
<dbReference type="InterPro" id="IPR001210">
    <property type="entry name" value="Ribosomal_eS17"/>
</dbReference>
<dbReference type="InterPro" id="IPR018273">
    <property type="entry name" value="Ribosomal_eS17_CS"/>
</dbReference>
<dbReference type="InterPro" id="IPR036401">
    <property type="entry name" value="Ribosomal_eS17_sf"/>
</dbReference>
<dbReference type="NCBIfam" id="NF002242">
    <property type="entry name" value="PRK01151.1"/>
    <property type="match status" value="1"/>
</dbReference>
<dbReference type="PANTHER" id="PTHR10732">
    <property type="entry name" value="40S RIBOSOMAL PROTEIN S17"/>
    <property type="match status" value="1"/>
</dbReference>
<dbReference type="PANTHER" id="PTHR10732:SF0">
    <property type="entry name" value="40S RIBOSOMAL PROTEIN S17"/>
    <property type="match status" value="1"/>
</dbReference>
<dbReference type="Pfam" id="PF00833">
    <property type="entry name" value="Ribosomal_S17e"/>
    <property type="match status" value="1"/>
</dbReference>
<dbReference type="SUPFAM" id="SSF116820">
    <property type="entry name" value="Rps17e-like"/>
    <property type="match status" value="1"/>
</dbReference>
<dbReference type="PROSITE" id="PS00712">
    <property type="entry name" value="RIBOSOMAL_S17E"/>
    <property type="match status" value="1"/>
</dbReference>
<feature type="chain" id="PRO_1000206619" description="Small ribosomal subunit protein eS17">
    <location>
        <begin position="1"/>
        <end position="79"/>
    </location>
</feature>
<gene>
    <name evidence="1" type="primary">rps17e</name>
    <name type="ordered locus">YG5714_1932</name>
</gene>
<keyword id="KW-0687">Ribonucleoprotein</keyword>
<keyword id="KW-0689">Ribosomal protein</keyword>
<reference key="1">
    <citation type="journal article" date="2009" name="Proc. Natl. Acad. Sci. U.S.A.">
        <title>Biogeography of the Sulfolobus islandicus pan-genome.</title>
        <authorList>
            <person name="Reno M.L."/>
            <person name="Held N.L."/>
            <person name="Fields C.J."/>
            <person name="Burke P.V."/>
            <person name="Whitaker R.J."/>
        </authorList>
    </citation>
    <scope>NUCLEOTIDE SEQUENCE [LARGE SCALE GENOMIC DNA]</scope>
    <source>
        <strain>Y.G.57.14 / Yellowstone #1</strain>
    </source>
</reference>
<evidence type="ECO:0000255" key="1">
    <source>
        <dbReference type="HAMAP-Rule" id="MF_00511"/>
    </source>
</evidence>
<evidence type="ECO:0000305" key="2"/>
<sequence>MGNIYTKDIKRIVKEIYNQYKDEIKDDYNTNKQIVVRYVDVKSKKVRNRIAGYLTRYYKIMKEKETSPTEEKEEISEEI</sequence>
<name>RS17E_SACI7</name>
<comment type="similarity">
    <text evidence="1">Belongs to the eukaryotic ribosomal protein eS17 family.</text>
</comment>
<proteinExistence type="inferred from homology"/>
<protein>
    <recommendedName>
        <fullName evidence="1">Small ribosomal subunit protein eS17</fullName>
    </recommendedName>
    <alternativeName>
        <fullName evidence="2">30S ribosomal protein S17e</fullName>
    </alternativeName>
</protein>
<accession>C3N7J4</accession>